<evidence type="ECO:0000255" key="1">
    <source>
        <dbReference type="HAMAP-Rule" id="MF_00484"/>
    </source>
</evidence>
<comment type="function">
    <text evidence="1">Synthesizes alpha-1,4-glucan chains using ADP-glucose.</text>
</comment>
<comment type="catalytic activity">
    <reaction evidence="1">
        <text>[(1-&gt;4)-alpha-D-glucosyl](n) + ADP-alpha-D-glucose = [(1-&gt;4)-alpha-D-glucosyl](n+1) + ADP + H(+)</text>
        <dbReference type="Rhea" id="RHEA:18189"/>
        <dbReference type="Rhea" id="RHEA-COMP:9584"/>
        <dbReference type="Rhea" id="RHEA-COMP:9587"/>
        <dbReference type="ChEBI" id="CHEBI:15378"/>
        <dbReference type="ChEBI" id="CHEBI:15444"/>
        <dbReference type="ChEBI" id="CHEBI:57498"/>
        <dbReference type="ChEBI" id="CHEBI:456216"/>
        <dbReference type="EC" id="2.4.1.21"/>
    </reaction>
</comment>
<comment type="pathway">
    <text evidence="1">Glycan biosynthesis; glycogen biosynthesis.</text>
</comment>
<comment type="similarity">
    <text evidence="1">Belongs to the glycosyltransferase 1 family. Bacterial/plant glycogen synthase subfamily.</text>
</comment>
<organism>
    <name type="scientific">Vibrio cholerae serotype O1 (strain ATCC 39315 / El Tor Inaba N16961)</name>
    <dbReference type="NCBI Taxonomy" id="243277"/>
    <lineage>
        <taxon>Bacteria</taxon>
        <taxon>Pseudomonadati</taxon>
        <taxon>Pseudomonadota</taxon>
        <taxon>Gammaproteobacteria</taxon>
        <taxon>Vibrionales</taxon>
        <taxon>Vibrionaceae</taxon>
        <taxon>Vibrio</taxon>
    </lineage>
</organism>
<gene>
    <name evidence="1" type="primary">glgA</name>
    <name type="ordered locus">VC_1726</name>
</gene>
<dbReference type="EC" id="2.4.1.21" evidence="1"/>
<dbReference type="EMBL" id="AE003852">
    <property type="protein sequence ID" value="AAF94876.1"/>
    <property type="molecule type" value="Genomic_DNA"/>
</dbReference>
<dbReference type="PIR" id="F82165">
    <property type="entry name" value="F82165"/>
</dbReference>
<dbReference type="RefSeq" id="NP_231362.1">
    <property type="nucleotide sequence ID" value="NC_002505.1"/>
</dbReference>
<dbReference type="RefSeq" id="WP_000434699.1">
    <property type="nucleotide sequence ID" value="NZ_LT906614.1"/>
</dbReference>
<dbReference type="SMR" id="Q9KRB6"/>
<dbReference type="STRING" id="243277.VC_1726"/>
<dbReference type="CAZy" id="GT5">
    <property type="family name" value="Glycosyltransferase Family 5"/>
</dbReference>
<dbReference type="DNASU" id="2613731"/>
<dbReference type="EnsemblBacteria" id="AAF94876">
    <property type="protein sequence ID" value="AAF94876"/>
    <property type="gene ID" value="VC_1726"/>
</dbReference>
<dbReference type="KEGG" id="vch:VC_1726"/>
<dbReference type="PATRIC" id="fig|243277.26.peg.1652"/>
<dbReference type="eggNOG" id="COG0297">
    <property type="taxonomic scope" value="Bacteria"/>
</dbReference>
<dbReference type="HOGENOM" id="CLU_009583_18_2_6"/>
<dbReference type="UniPathway" id="UPA00164"/>
<dbReference type="Proteomes" id="UP000000584">
    <property type="component" value="Chromosome 1"/>
</dbReference>
<dbReference type="GO" id="GO:0005829">
    <property type="term" value="C:cytosol"/>
    <property type="evidence" value="ECO:0000318"/>
    <property type="project" value="GO_Central"/>
</dbReference>
<dbReference type="GO" id="GO:0009011">
    <property type="term" value="F:alpha-1,4-glucan glucosyltransferase (ADP-glucose donor) activity"/>
    <property type="evidence" value="ECO:0007669"/>
    <property type="project" value="UniProtKB-UniRule"/>
</dbReference>
<dbReference type="GO" id="GO:0004373">
    <property type="term" value="F:alpha-1,4-glucan glucosyltransferase (UDP-glucose donor) activity"/>
    <property type="evidence" value="ECO:0007669"/>
    <property type="project" value="InterPro"/>
</dbReference>
<dbReference type="GO" id="GO:0005978">
    <property type="term" value="P:glycogen biosynthetic process"/>
    <property type="evidence" value="ECO:0000318"/>
    <property type="project" value="GO_Central"/>
</dbReference>
<dbReference type="CDD" id="cd03791">
    <property type="entry name" value="GT5_Glycogen_synthase_DULL1-like"/>
    <property type="match status" value="1"/>
</dbReference>
<dbReference type="Gene3D" id="3.40.50.2000">
    <property type="entry name" value="Glycogen Phosphorylase B"/>
    <property type="match status" value="2"/>
</dbReference>
<dbReference type="HAMAP" id="MF_00484">
    <property type="entry name" value="Glycogen_synth"/>
    <property type="match status" value="1"/>
</dbReference>
<dbReference type="InterPro" id="IPR001296">
    <property type="entry name" value="Glyco_trans_1"/>
</dbReference>
<dbReference type="InterPro" id="IPR011835">
    <property type="entry name" value="GS/SS"/>
</dbReference>
<dbReference type="InterPro" id="IPR013534">
    <property type="entry name" value="Starch_synth_cat_dom"/>
</dbReference>
<dbReference type="NCBIfam" id="TIGR02095">
    <property type="entry name" value="glgA"/>
    <property type="match status" value="1"/>
</dbReference>
<dbReference type="NCBIfam" id="NF001903">
    <property type="entry name" value="PRK00654.2-2"/>
    <property type="match status" value="1"/>
</dbReference>
<dbReference type="PANTHER" id="PTHR45825:SF11">
    <property type="entry name" value="ALPHA AMYLASE DOMAIN-CONTAINING PROTEIN"/>
    <property type="match status" value="1"/>
</dbReference>
<dbReference type="PANTHER" id="PTHR45825">
    <property type="entry name" value="GRANULE-BOUND STARCH SYNTHASE 1, CHLOROPLASTIC/AMYLOPLASTIC"/>
    <property type="match status" value="1"/>
</dbReference>
<dbReference type="Pfam" id="PF08323">
    <property type="entry name" value="Glyco_transf_5"/>
    <property type="match status" value="1"/>
</dbReference>
<dbReference type="Pfam" id="PF00534">
    <property type="entry name" value="Glycos_transf_1"/>
    <property type="match status" value="1"/>
</dbReference>
<dbReference type="SUPFAM" id="SSF53756">
    <property type="entry name" value="UDP-Glycosyltransferase/glycogen phosphorylase"/>
    <property type="match status" value="1"/>
</dbReference>
<keyword id="KW-0320">Glycogen biosynthesis</keyword>
<keyword id="KW-0328">Glycosyltransferase</keyword>
<keyword id="KW-1185">Reference proteome</keyword>
<keyword id="KW-0808">Transferase</keyword>
<accession>Q9KRB6</accession>
<feature type="chain" id="PRO_0000188660" description="Glycogen synthase">
    <location>
        <begin position="1"/>
        <end position="484"/>
    </location>
</feature>
<feature type="binding site" evidence="1">
    <location>
        <position position="18"/>
    </location>
    <ligand>
        <name>ADP-alpha-D-glucose</name>
        <dbReference type="ChEBI" id="CHEBI:57498"/>
    </ligand>
</feature>
<sequence>MEQFNVWFTVSEVQGLVKSGGLADVAKALPQALKALHQQVAIALPAYRSVPGKEDAELVLETELTHWPHTQYRVLKRDLDGVPIYLIDCPAYFDRPALYAENNQAYADNGERFGFFSAACLDVLPKLGIQPDIIHANDWHTGLVPFLLKTRYRYDSFFEQVKSVLTVHNAIFKGIFSYHQLEVIPELNLSGMEFLQYGHDHVSMLRAGIAFADKVNAVSPNYAAELLTPLGAHGLVDDFVRRARDLHGIVNGCDYSEWNPRTDHYLPATYSDEPESMRKGKALCKTALQEELHLPVTDVPLFGMVCRLTHQKGFHYLLPILEQFLRNNVQVVIVGTGEPEVAARLNKIAHYHRAKFAFVETYSERLAHWVEAGSDFFLMPSEFEACGLNQIYSMAYGTLPIVREVGGLKDTVNDYDKFPERATGFGYQEPTPEALLITMQRALLFYLQQPEEMLKVQQRAMQQNFSWEESAQEYMKMYRLARFG</sequence>
<reference key="1">
    <citation type="journal article" date="2000" name="Nature">
        <title>DNA sequence of both chromosomes of the cholera pathogen Vibrio cholerae.</title>
        <authorList>
            <person name="Heidelberg J.F."/>
            <person name="Eisen J.A."/>
            <person name="Nelson W.C."/>
            <person name="Clayton R.A."/>
            <person name="Gwinn M.L."/>
            <person name="Dodson R.J."/>
            <person name="Haft D.H."/>
            <person name="Hickey E.K."/>
            <person name="Peterson J.D."/>
            <person name="Umayam L.A."/>
            <person name="Gill S.R."/>
            <person name="Nelson K.E."/>
            <person name="Read T.D."/>
            <person name="Tettelin H."/>
            <person name="Richardson D.L."/>
            <person name="Ermolaeva M.D."/>
            <person name="Vamathevan J.J."/>
            <person name="Bass S."/>
            <person name="Qin H."/>
            <person name="Dragoi I."/>
            <person name="Sellers P."/>
            <person name="McDonald L.A."/>
            <person name="Utterback T.R."/>
            <person name="Fleischmann R.D."/>
            <person name="Nierman W.C."/>
            <person name="White O."/>
            <person name="Salzberg S.L."/>
            <person name="Smith H.O."/>
            <person name="Colwell R.R."/>
            <person name="Mekalanos J.J."/>
            <person name="Venter J.C."/>
            <person name="Fraser C.M."/>
        </authorList>
    </citation>
    <scope>NUCLEOTIDE SEQUENCE [LARGE SCALE GENOMIC DNA]</scope>
    <source>
        <strain>ATCC 39315 / El Tor Inaba N16961</strain>
    </source>
</reference>
<protein>
    <recommendedName>
        <fullName evidence="1">Glycogen synthase</fullName>
        <ecNumber evidence="1">2.4.1.21</ecNumber>
    </recommendedName>
    <alternativeName>
        <fullName evidence="1">Starch [bacterial glycogen] synthase</fullName>
    </alternativeName>
</protein>
<proteinExistence type="inferred from homology"/>
<name>GLGA_VIBCH</name>